<reference key="1">
    <citation type="submission" date="2008-02" db="EMBL/GenBank/DDBJ databases">
        <title>Complete sequence of Yersinia pseudotuberculosis YPIII.</title>
        <authorList>
            <consortium name="US DOE Joint Genome Institute"/>
            <person name="Copeland A."/>
            <person name="Lucas S."/>
            <person name="Lapidus A."/>
            <person name="Glavina del Rio T."/>
            <person name="Dalin E."/>
            <person name="Tice H."/>
            <person name="Bruce D."/>
            <person name="Goodwin L."/>
            <person name="Pitluck S."/>
            <person name="Munk A.C."/>
            <person name="Brettin T."/>
            <person name="Detter J.C."/>
            <person name="Han C."/>
            <person name="Tapia R."/>
            <person name="Schmutz J."/>
            <person name="Larimer F."/>
            <person name="Land M."/>
            <person name="Hauser L."/>
            <person name="Challacombe J.F."/>
            <person name="Green L."/>
            <person name="Lindler L.E."/>
            <person name="Nikolich M.P."/>
            <person name="Richardson P."/>
        </authorList>
    </citation>
    <scope>NUCLEOTIDE SEQUENCE [LARGE SCALE GENOMIC DNA]</scope>
    <source>
        <strain>YPIII</strain>
    </source>
</reference>
<evidence type="ECO:0000255" key="1">
    <source>
        <dbReference type="HAMAP-Rule" id="MF_00098"/>
    </source>
</evidence>
<dbReference type="EC" id="6.1.1.10" evidence="1"/>
<dbReference type="EMBL" id="CP000950">
    <property type="protein sequence ID" value="ACA68831.1"/>
    <property type="molecule type" value="Genomic_DNA"/>
</dbReference>
<dbReference type="RefSeq" id="WP_012304254.1">
    <property type="nucleotide sequence ID" value="NZ_CP009792.1"/>
</dbReference>
<dbReference type="SMR" id="B1JPY8"/>
<dbReference type="KEGG" id="ypy:YPK_2554"/>
<dbReference type="PATRIC" id="fig|502800.11.peg.3250"/>
<dbReference type="GO" id="GO:0005829">
    <property type="term" value="C:cytosol"/>
    <property type="evidence" value="ECO:0007669"/>
    <property type="project" value="TreeGrafter"/>
</dbReference>
<dbReference type="GO" id="GO:0005524">
    <property type="term" value="F:ATP binding"/>
    <property type="evidence" value="ECO:0007669"/>
    <property type="project" value="UniProtKB-UniRule"/>
</dbReference>
<dbReference type="GO" id="GO:0046872">
    <property type="term" value="F:metal ion binding"/>
    <property type="evidence" value="ECO:0007669"/>
    <property type="project" value="UniProtKB-KW"/>
</dbReference>
<dbReference type="GO" id="GO:0004825">
    <property type="term" value="F:methionine-tRNA ligase activity"/>
    <property type="evidence" value="ECO:0007669"/>
    <property type="project" value="UniProtKB-UniRule"/>
</dbReference>
<dbReference type="GO" id="GO:0000049">
    <property type="term" value="F:tRNA binding"/>
    <property type="evidence" value="ECO:0007669"/>
    <property type="project" value="UniProtKB-KW"/>
</dbReference>
<dbReference type="GO" id="GO:0006431">
    <property type="term" value="P:methionyl-tRNA aminoacylation"/>
    <property type="evidence" value="ECO:0007669"/>
    <property type="project" value="UniProtKB-UniRule"/>
</dbReference>
<dbReference type="CDD" id="cd07957">
    <property type="entry name" value="Anticodon_Ia_Met"/>
    <property type="match status" value="1"/>
</dbReference>
<dbReference type="CDD" id="cd00814">
    <property type="entry name" value="MetRS_core"/>
    <property type="match status" value="1"/>
</dbReference>
<dbReference type="CDD" id="cd02800">
    <property type="entry name" value="tRNA_bind_EcMetRS_like"/>
    <property type="match status" value="1"/>
</dbReference>
<dbReference type="FunFam" id="1.10.730.10:FF:000005">
    <property type="entry name" value="Methionine--tRNA ligase"/>
    <property type="match status" value="1"/>
</dbReference>
<dbReference type="FunFam" id="2.20.28.20:FF:000001">
    <property type="entry name" value="Methionine--tRNA ligase"/>
    <property type="match status" value="1"/>
</dbReference>
<dbReference type="FunFam" id="2.40.50.140:FF:000042">
    <property type="entry name" value="Methionine--tRNA ligase"/>
    <property type="match status" value="1"/>
</dbReference>
<dbReference type="Gene3D" id="3.40.50.620">
    <property type="entry name" value="HUPs"/>
    <property type="match status" value="1"/>
</dbReference>
<dbReference type="Gene3D" id="1.10.730.10">
    <property type="entry name" value="Isoleucyl-tRNA Synthetase, Domain 1"/>
    <property type="match status" value="1"/>
</dbReference>
<dbReference type="Gene3D" id="2.20.28.20">
    <property type="entry name" value="Methionyl-tRNA synthetase, Zn-domain"/>
    <property type="match status" value="1"/>
</dbReference>
<dbReference type="Gene3D" id="2.40.50.140">
    <property type="entry name" value="Nucleic acid-binding proteins"/>
    <property type="match status" value="1"/>
</dbReference>
<dbReference type="HAMAP" id="MF_00098">
    <property type="entry name" value="Met_tRNA_synth_type1"/>
    <property type="match status" value="1"/>
</dbReference>
<dbReference type="InterPro" id="IPR001412">
    <property type="entry name" value="aa-tRNA-synth_I_CS"/>
</dbReference>
<dbReference type="InterPro" id="IPR041872">
    <property type="entry name" value="Anticodon_Met"/>
</dbReference>
<dbReference type="InterPro" id="IPR004495">
    <property type="entry name" value="Met-tRNA-synth_bsu_C"/>
</dbReference>
<dbReference type="InterPro" id="IPR023458">
    <property type="entry name" value="Met-tRNA_ligase_1"/>
</dbReference>
<dbReference type="InterPro" id="IPR014758">
    <property type="entry name" value="Met-tRNA_synth"/>
</dbReference>
<dbReference type="InterPro" id="IPR015413">
    <property type="entry name" value="Methionyl/Leucyl_tRNA_Synth"/>
</dbReference>
<dbReference type="InterPro" id="IPR033911">
    <property type="entry name" value="MetRS_core"/>
</dbReference>
<dbReference type="InterPro" id="IPR029038">
    <property type="entry name" value="MetRS_Zn"/>
</dbReference>
<dbReference type="InterPro" id="IPR012340">
    <property type="entry name" value="NA-bd_OB-fold"/>
</dbReference>
<dbReference type="InterPro" id="IPR014729">
    <property type="entry name" value="Rossmann-like_a/b/a_fold"/>
</dbReference>
<dbReference type="InterPro" id="IPR002547">
    <property type="entry name" value="tRNA-bd_dom"/>
</dbReference>
<dbReference type="InterPro" id="IPR009080">
    <property type="entry name" value="tRNAsynth_Ia_anticodon-bd"/>
</dbReference>
<dbReference type="NCBIfam" id="TIGR00398">
    <property type="entry name" value="metG"/>
    <property type="match status" value="1"/>
</dbReference>
<dbReference type="NCBIfam" id="TIGR00399">
    <property type="entry name" value="metG_C_term"/>
    <property type="match status" value="1"/>
</dbReference>
<dbReference type="NCBIfam" id="NF001100">
    <property type="entry name" value="PRK00133.1"/>
    <property type="match status" value="1"/>
</dbReference>
<dbReference type="PANTHER" id="PTHR45765">
    <property type="entry name" value="METHIONINE--TRNA LIGASE"/>
    <property type="match status" value="1"/>
</dbReference>
<dbReference type="PANTHER" id="PTHR45765:SF1">
    <property type="entry name" value="METHIONINE--TRNA LIGASE, CYTOPLASMIC"/>
    <property type="match status" value="1"/>
</dbReference>
<dbReference type="Pfam" id="PF19303">
    <property type="entry name" value="Anticodon_3"/>
    <property type="match status" value="1"/>
</dbReference>
<dbReference type="Pfam" id="PF09334">
    <property type="entry name" value="tRNA-synt_1g"/>
    <property type="match status" value="1"/>
</dbReference>
<dbReference type="Pfam" id="PF01588">
    <property type="entry name" value="tRNA_bind"/>
    <property type="match status" value="1"/>
</dbReference>
<dbReference type="PRINTS" id="PR01041">
    <property type="entry name" value="TRNASYNTHMET"/>
</dbReference>
<dbReference type="SUPFAM" id="SSF47323">
    <property type="entry name" value="Anticodon-binding domain of a subclass of class I aminoacyl-tRNA synthetases"/>
    <property type="match status" value="1"/>
</dbReference>
<dbReference type="SUPFAM" id="SSF57770">
    <property type="entry name" value="Methionyl-tRNA synthetase (MetRS), Zn-domain"/>
    <property type="match status" value="1"/>
</dbReference>
<dbReference type="SUPFAM" id="SSF50249">
    <property type="entry name" value="Nucleic acid-binding proteins"/>
    <property type="match status" value="1"/>
</dbReference>
<dbReference type="SUPFAM" id="SSF52374">
    <property type="entry name" value="Nucleotidylyl transferase"/>
    <property type="match status" value="1"/>
</dbReference>
<dbReference type="PROSITE" id="PS00178">
    <property type="entry name" value="AA_TRNA_LIGASE_I"/>
    <property type="match status" value="1"/>
</dbReference>
<dbReference type="PROSITE" id="PS50886">
    <property type="entry name" value="TRBD"/>
    <property type="match status" value="1"/>
</dbReference>
<protein>
    <recommendedName>
        <fullName evidence="1">Methionine--tRNA ligase</fullName>
        <ecNumber evidence="1">6.1.1.10</ecNumber>
    </recommendedName>
    <alternativeName>
        <fullName evidence="1">Methionyl-tRNA synthetase</fullName>
        <shortName evidence="1">MetRS</shortName>
    </alternativeName>
</protein>
<sequence>MAQVAKKILVTCALPYANGSIHLGHMLEHIQADIWVRFQRMRGNQVHFICADDAHGTPIMLKAQQMGIEPEQMIAEMSQEHQQDFAGFAISYDNYHSTHSDENRELSSLIYGRLKANGYIKNRTISQLYDPEKGMFLPDRFVKGTCPKCKAPEQYGDNCEVCGATYSPTELIDPKSAVSGATPVMRESEHFFFDLPAFSDMLQAWTRSGALQEQVANKMQEWFDSGLQQWDITRDAPYFGFEVPDAPGKYFYVWLDAPIGYMGAFKNLCDKRGDLDFDEFWGKDAKTDLYHFIGKDIVYFHSLFWPAMLEGSNFRKPTNLFVHGYVTVNGAKMSKSRGTFIKAGTYLKYLDADCLRYYYAAKLSSRIDDIDLNLEDFVQRVNVDIVNKVVNLASRNAGFINKRFAGQLADQLADPVLYKTFTDAATSIADAYNNRESGKAIREIMALADVANRYVDEQAPWVVAKQEGRDADLHAICSMGINLFRVLMTYLKPVLPSLTERTEAFLNTELTWDSIEQPLLGHSITAFKALFNRIDLDKVNEMVASSKEDMAPATRVTGPLADDPIQETISFDDFAKVDMRIALIQQAEFVEGSDKLLKLTLELGGETRQIFSGIRSAYPDPKALEGRMTVMVANLAPRKMRFGVSEGMVIAAGPGGSDIFLLSPDSGAQPGMQVK</sequence>
<accession>B1JPY8</accession>
<organism>
    <name type="scientific">Yersinia pseudotuberculosis serotype O:3 (strain YPIII)</name>
    <dbReference type="NCBI Taxonomy" id="502800"/>
    <lineage>
        <taxon>Bacteria</taxon>
        <taxon>Pseudomonadati</taxon>
        <taxon>Pseudomonadota</taxon>
        <taxon>Gammaproteobacteria</taxon>
        <taxon>Enterobacterales</taxon>
        <taxon>Yersiniaceae</taxon>
        <taxon>Yersinia</taxon>
    </lineage>
</organism>
<keyword id="KW-0030">Aminoacyl-tRNA synthetase</keyword>
<keyword id="KW-0067">ATP-binding</keyword>
<keyword id="KW-0963">Cytoplasm</keyword>
<keyword id="KW-0436">Ligase</keyword>
<keyword id="KW-0479">Metal-binding</keyword>
<keyword id="KW-0547">Nucleotide-binding</keyword>
<keyword id="KW-0648">Protein biosynthesis</keyword>
<keyword id="KW-0694">RNA-binding</keyword>
<keyword id="KW-0820">tRNA-binding</keyword>
<keyword id="KW-0862">Zinc</keyword>
<feature type="chain" id="PRO_1000093747" description="Methionine--tRNA ligase">
    <location>
        <begin position="1"/>
        <end position="675"/>
    </location>
</feature>
<feature type="domain" description="tRNA-binding" evidence="1">
    <location>
        <begin position="573"/>
        <end position="675"/>
    </location>
</feature>
<feature type="short sequence motif" description="'HIGH' region">
    <location>
        <begin position="15"/>
        <end position="25"/>
    </location>
</feature>
<feature type="short sequence motif" description="'KMSKS' region">
    <location>
        <begin position="332"/>
        <end position="336"/>
    </location>
</feature>
<feature type="binding site" evidence="1">
    <location>
        <position position="146"/>
    </location>
    <ligand>
        <name>Zn(2+)</name>
        <dbReference type="ChEBI" id="CHEBI:29105"/>
    </ligand>
</feature>
<feature type="binding site" evidence="1">
    <location>
        <position position="149"/>
    </location>
    <ligand>
        <name>Zn(2+)</name>
        <dbReference type="ChEBI" id="CHEBI:29105"/>
    </ligand>
</feature>
<feature type="binding site" evidence="1">
    <location>
        <position position="159"/>
    </location>
    <ligand>
        <name>Zn(2+)</name>
        <dbReference type="ChEBI" id="CHEBI:29105"/>
    </ligand>
</feature>
<feature type="binding site" evidence="1">
    <location>
        <position position="162"/>
    </location>
    <ligand>
        <name>Zn(2+)</name>
        <dbReference type="ChEBI" id="CHEBI:29105"/>
    </ligand>
</feature>
<feature type="binding site" evidence="1">
    <location>
        <position position="335"/>
    </location>
    <ligand>
        <name>ATP</name>
        <dbReference type="ChEBI" id="CHEBI:30616"/>
    </ligand>
</feature>
<gene>
    <name evidence="1" type="primary">metG</name>
    <name type="ordered locus">YPK_2554</name>
</gene>
<name>SYM_YERPY</name>
<comment type="function">
    <text evidence="1">Is required not only for elongation of protein synthesis but also for the initiation of all mRNA translation through initiator tRNA(fMet) aminoacylation.</text>
</comment>
<comment type="catalytic activity">
    <reaction evidence="1">
        <text>tRNA(Met) + L-methionine + ATP = L-methionyl-tRNA(Met) + AMP + diphosphate</text>
        <dbReference type="Rhea" id="RHEA:13481"/>
        <dbReference type="Rhea" id="RHEA-COMP:9667"/>
        <dbReference type="Rhea" id="RHEA-COMP:9698"/>
        <dbReference type="ChEBI" id="CHEBI:30616"/>
        <dbReference type="ChEBI" id="CHEBI:33019"/>
        <dbReference type="ChEBI" id="CHEBI:57844"/>
        <dbReference type="ChEBI" id="CHEBI:78442"/>
        <dbReference type="ChEBI" id="CHEBI:78530"/>
        <dbReference type="ChEBI" id="CHEBI:456215"/>
        <dbReference type="EC" id="6.1.1.10"/>
    </reaction>
</comment>
<comment type="cofactor">
    <cofactor evidence="1">
        <name>Zn(2+)</name>
        <dbReference type="ChEBI" id="CHEBI:29105"/>
    </cofactor>
    <text evidence="1">Binds 1 zinc ion per subunit.</text>
</comment>
<comment type="subunit">
    <text evidence="1">Homodimer.</text>
</comment>
<comment type="subcellular location">
    <subcellularLocation>
        <location evidence="1">Cytoplasm</location>
    </subcellularLocation>
</comment>
<comment type="similarity">
    <text evidence="1">Belongs to the class-I aminoacyl-tRNA synthetase family. MetG type 1 subfamily.</text>
</comment>
<proteinExistence type="inferred from homology"/>